<reference key="1">
    <citation type="journal article" date="1975" name="Biochemistry">
        <title>Isolation, characterization, and amino acid sequence of melanotropins from camel pituitary glands.</title>
        <authorList>
            <person name="Li C.H."/>
            <person name="Danho W.O."/>
            <person name="Chung D."/>
            <person name="Rao A.J."/>
        </authorList>
    </citation>
    <scope>PROTEIN SEQUENCE</scope>
    <scope>ACETYLATION AT SER-1</scope>
    <scope>AMIDATION AT VAL-13</scope>
</reference>
<proteinExistence type="evidence at protein level"/>
<evidence type="ECO:0000269" key="1">
    <source>
    </source>
</evidence>
<evidence type="ECO:0000305" key="2"/>
<keyword id="KW-0007">Acetylation</keyword>
<keyword id="KW-0027">Amidation</keyword>
<keyword id="KW-0903">Direct protein sequencing</keyword>
<keyword id="KW-0372">Hormone</keyword>
<keyword id="KW-0964">Secreted</keyword>
<dbReference type="PIR" id="A01464">
    <property type="entry name" value="MTCMAD"/>
</dbReference>
<dbReference type="iPTMnet" id="P61281"/>
<dbReference type="GO" id="GO:0005576">
    <property type="term" value="C:extracellular region"/>
    <property type="evidence" value="ECO:0007669"/>
    <property type="project" value="UniProtKB-SubCell"/>
</dbReference>
<dbReference type="GO" id="GO:0005179">
    <property type="term" value="F:hormone activity"/>
    <property type="evidence" value="ECO:0007669"/>
    <property type="project" value="UniProtKB-KW"/>
</dbReference>
<dbReference type="InterPro" id="IPR013531">
    <property type="entry name" value="Mcrtin_ACTH_cent"/>
</dbReference>
<dbReference type="Pfam" id="PF00976">
    <property type="entry name" value="ACTH_domain"/>
    <property type="match status" value="1"/>
</dbReference>
<protein>
    <recommendedName>
        <fullName>Melanotropin alpha</fullName>
    </recommendedName>
    <alternativeName>
        <fullName>Alpha-MSH</fullName>
    </alternativeName>
</protein>
<sequence length="13" mass="1624">SYSMEHFRWGKPV</sequence>
<name>MLA_CAMDR</name>
<comment type="subcellular location">
    <subcellularLocation>
        <location>Secreted</location>
    </subcellularLocation>
</comment>
<comment type="PTM">
    <text>About 50% of molecules were found to be acetylated on the N-terminal serine.</text>
</comment>
<comment type="similarity">
    <text evidence="2">Belongs to the POMC family.</text>
</comment>
<feature type="peptide" id="PRO_0000044292" description="Melanotropin alpha">
    <location>
        <begin position="1"/>
        <end position="13"/>
    </location>
</feature>
<feature type="modified residue" description="N-acetylserine" evidence="1">
    <location>
        <position position="1"/>
    </location>
</feature>
<feature type="modified residue" description="Valine amide" evidence="1">
    <location>
        <position position="13"/>
    </location>
</feature>
<accession>P61281</accession>
<accession>P01198</accession>
<organism>
    <name type="scientific">Camelus dromedarius</name>
    <name type="common">Dromedary</name>
    <name type="synonym">Arabian camel</name>
    <dbReference type="NCBI Taxonomy" id="9838"/>
    <lineage>
        <taxon>Eukaryota</taxon>
        <taxon>Metazoa</taxon>
        <taxon>Chordata</taxon>
        <taxon>Craniata</taxon>
        <taxon>Vertebrata</taxon>
        <taxon>Euteleostomi</taxon>
        <taxon>Mammalia</taxon>
        <taxon>Eutheria</taxon>
        <taxon>Laurasiatheria</taxon>
        <taxon>Artiodactyla</taxon>
        <taxon>Tylopoda</taxon>
        <taxon>Camelidae</taxon>
        <taxon>Camelus</taxon>
    </lineage>
</organism>